<keyword id="KW-0963">Cytoplasm</keyword>
<keyword id="KW-0520">NAD</keyword>
<keyword id="KW-0560">Oxidoreductase</keyword>
<keyword id="KW-0816">Tricarboxylic acid cycle</keyword>
<sequence>MAVEPLRVLVTGAAGQIGYALVPMIARGIMLGANQPVILHMLDIPPAAEALNGVKMELVDAAFPLLKGVVATTDAAEACKGVNVAVMVGGFPRKEGMERKDVMSKNVSIYKAQASALEQHAAPNCKVLVVANPANTNALILKEFAPSIPEKNISCLTRLDHNRALGQISERLNVQVSDVKNVIIWGNHSSTQYPDVNHATVKTQGVDKPVRELVADDAWLNGEFITTVQQRGAAIIKARKLSSALSAASSACDHIHDWVLGTPEGTWVSMGVYSDGSYNVPAGIIYSFPVTCKNGEWTIVQGLPIDDDSRKKMDATAAELVEEKTLAYSCLT</sequence>
<name>MDHC_MESCR</name>
<gene>
    <name type="primary">MDH</name>
</gene>
<feature type="chain" id="PRO_0000113417" description="Malate dehydrogenase, cytoplasmic">
    <location>
        <begin position="1"/>
        <end position="332"/>
    </location>
</feature>
<feature type="active site" description="Proton acceptor" evidence="2">
    <location>
        <position position="188"/>
    </location>
</feature>
<feature type="binding site" evidence="3">
    <location>
        <begin position="16"/>
        <end position="17"/>
    </location>
    <ligand>
        <name>NAD(+)</name>
        <dbReference type="ChEBI" id="CHEBI:57540"/>
    </ligand>
</feature>
<feature type="binding site" evidence="3">
    <location>
        <position position="43"/>
    </location>
    <ligand>
        <name>NAD(+)</name>
        <dbReference type="ChEBI" id="CHEBI:57540"/>
    </ligand>
</feature>
<feature type="binding site" evidence="3">
    <location>
        <position position="90"/>
    </location>
    <ligand>
        <name>NAD(+)</name>
        <dbReference type="ChEBI" id="CHEBI:57540"/>
    </ligand>
</feature>
<feature type="binding site" evidence="3">
    <location>
        <position position="99"/>
    </location>
    <ligand>
        <name>oxaloacetate</name>
        <dbReference type="ChEBI" id="CHEBI:16452"/>
    </ligand>
</feature>
<feature type="binding site" evidence="3">
    <location>
        <position position="113"/>
    </location>
    <ligand>
        <name>NAD(+)</name>
        <dbReference type="ChEBI" id="CHEBI:57540"/>
    </ligand>
</feature>
<feature type="binding site" evidence="3">
    <location>
        <position position="132"/>
    </location>
    <ligand>
        <name>NAD(+)</name>
        <dbReference type="ChEBI" id="CHEBI:57540"/>
    </ligand>
</feature>
<feature type="binding site" evidence="3">
    <location>
        <position position="132"/>
    </location>
    <ligand>
        <name>oxaloacetate</name>
        <dbReference type="ChEBI" id="CHEBI:16452"/>
    </ligand>
</feature>
<feature type="binding site" evidence="3">
    <location>
        <position position="163"/>
    </location>
    <ligand>
        <name>oxaloacetate</name>
        <dbReference type="ChEBI" id="CHEBI:16452"/>
    </ligand>
</feature>
<feature type="binding site" evidence="3">
    <location>
        <position position="188"/>
    </location>
    <ligand>
        <name>oxaloacetate</name>
        <dbReference type="ChEBI" id="CHEBI:16452"/>
    </ligand>
</feature>
<feature type="binding site" evidence="3">
    <location>
        <position position="243"/>
    </location>
    <ligand>
        <name>oxaloacetate</name>
        <dbReference type="ChEBI" id="CHEBI:16452"/>
    </ligand>
</feature>
<accession>O24047</accession>
<reference key="1">
    <citation type="journal article" date="1997" name="Gene">
        <title>Cloning and sequence analysis of cDNAs encoding plant cytosolic malate dehydrogenase.</title>
        <authorList>
            <person name="Ocheretina O."/>
            <person name="Scheibe R."/>
        </authorList>
    </citation>
    <scope>NUCLEOTIDE SEQUENCE [MRNA]</scope>
    <source>
        <tissue>Green leaf</tissue>
    </source>
</reference>
<comment type="catalytic activity">
    <reaction evidence="4">
        <text>(S)-malate + NAD(+) = oxaloacetate + NADH + H(+)</text>
        <dbReference type="Rhea" id="RHEA:21432"/>
        <dbReference type="ChEBI" id="CHEBI:15378"/>
        <dbReference type="ChEBI" id="CHEBI:15589"/>
        <dbReference type="ChEBI" id="CHEBI:16452"/>
        <dbReference type="ChEBI" id="CHEBI:57540"/>
        <dbReference type="ChEBI" id="CHEBI:57945"/>
        <dbReference type="EC" id="1.1.1.37"/>
    </reaction>
</comment>
<comment type="subunit">
    <text evidence="1">Homodimer.</text>
</comment>
<comment type="subcellular location">
    <subcellularLocation>
        <location>Cytoplasm</location>
    </subcellularLocation>
</comment>
<comment type="similarity">
    <text evidence="5">Belongs to the LDH/MDH superfamily. MDH type 2 family.</text>
</comment>
<organism>
    <name type="scientific">Mesembryanthemum crystallinum</name>
    <name type="common">Common ice plant</name>
    <name type="synonym">Cryophytum crystallinum</name>
    <dbReference type="NCBI Taxonomy" id="3544"/>
    <lineage>
        <taxon>Eukaryota</taxon>
        <taxon>Viridiplantae</taxon>
        <taxon>Streptophyta</taxon>
        <taxon>Embryophyta</taxon>
        <taxon>Tracheophyta</taxon>
        <taxon>Spermatophyta</taxon>
        <taxon>Magnoliopsida</taxon>
        <taxon>eudicotyledons</taxon>
        <taxon>Gunneridae</taxon>
        <taxon>Pentapetalae</taxon>
        <taxon>Caryophyllales</taxon>
        <taxon>Aizoaceae</taxon>
        <taxon>Mesembryanthemum</taxon>
        <taxon>Mesembryanthemum subgen. Cryophytum</taxon>
    </lineage>
</organism>
<proteinExistence type="evidence at transcript level"/>
<protein>
    <recommendedName>
        <fullName>Malate dehydrogenase, cytoplasmic</fullName>
        <ecNumber>1.1.1.37</ecNumber>
    </recommendedName>
</protein>
<dbReference type="EC" id="1.1.1.37"/>
<dbReference type="EMBL" id="X96539">
    <property type="protein sequence ID" value="CAA65384.1"/>
    <property type="molecule type" value="mRNA"/>
</dbReference>
<dbReference type="PIR" id="T12433">
    <property type="entry name" value="T12433"/>
</dbReference>
<dbReference type="SMR" id="O24047"/>
<dbReference type="BRENDA" id="1.1.1.37">
    <property type="organism ID" value="3238"/>
</dbReference>
<dbReference type="GO" id="GO:0005737">
    <property type="term" value="C:cytoplasm"/>
    <property type="evidence" value="ECO:0007669"/>
    <property type="project" value="UniProtKB-SubCell"/>
</dbReference>
<dbReference type="GO" id="GO:0030060">
    <property type="term" value="F:L-malate dehydrogenase (NAD+) activity"/>
    <property type="evidence" value="ECO:0007669"/>
    <property type="project" value="UniProtKB-EC"/>
</dbReference>
<dbReference type="GO" id="GO:0006108">
    <property type="term" value="P:malate metabolic process"/>
    <property type="evidence" value="ECO:0007669"/>
    <property type="project" value="InterPro"/>
</dbReference>
<dbReference type="GO" id="GO:0006099">
    <property type="term" value="P:tricarboxylic acid cycle"/>
    <property type="evidence" value="ECO:0007669"/>
    <property type="project" value="UniProtKB-KW"/>
</dbReference>
<dbReference type="CDD" id="cd01336">
    <property type="entry name" value="MDH_cytoplasmic_cytosolic"/>
    <property type="match status" value="1"/>
</dbReference>
<dbReference type="FunFam" id="3.40.50.720:FF:000010">
    <property type="entry name" value="Malate dehydrogenase"/>
    <property type="match status" value="1"/>
</dbReference>
<dbReference type="FunFam" id="3.90.110.10:FF:000002">
    <property type="entry name" value="Malate dehydrogenase"/>
    <property type="match status" value="1"/>
</dbReference>
<dbReference type="Gene3D" id="3.90.110.10">
    <property type="entry name" value="Lactate dehydrogenase/glycoside hydrolase, family 4, C-terminal"/>
    <property type="match status" value="1"/>
</dbReference>
<dbReference type="Gene3D" id="3.40.50.720">
    <property type="entry name" value="NAD(P)-binding Rossmann-like Domain"/>
    <property type="match status" value="1"/>
</dbReference>
<dbReference type="InterPro" id="IPR001557">
    <property type="entry name" value="L-lactate/malate_DH"/>
</dbReference>
<dbReference type="InterPro" id="IPR022383">
    <property type="entry name" value="Lactate/malate_DH_C"/>
</dbReference>
<dbReference type="InterPro" id="IPR001236">
    <property type="entry name" value="Lactate/malate_DH_N"/>
</dbReference>
<dbReference type="InterPro" id="IPR015955">
    <property type="entry name" value="Lactate_DH/Glyco_Ohase_4_C"/>
</dbReference>
<dbReference type="InterPro" id="IPR001252">
    <property type="entry name" value="Malate_DH_AS"/>
</dbReference>
<dbReference type="InterPro" id="IPR011274">
    <property type="entry name" value="Malate_DH_NAD-dep_euk"/>
</dbReference>
<dbReference type="InterPro" id="IPR010945">
    <property type="entry name" value="Malate_DH_type2"/>
</dbReference>
<dbReference type="InterPro" id="IPR036291">
    <property type="entry name" value="NAD(P)-bd_dom_sf"/>
</dbReference>
<dbReference type="NCBIfam" id="TIGR01759">
    <property type="entry name" value="MalateDH-SF1"/>
    <property type="match status" value="1"/>
</dbReference>
<dbReference type="NCBIfam" id="TIGR01758">
    <property type="entry name" value="MDH_euk_cyt"/>
    <property type="match status" value="1"/>
</dbReference>
<dbReference type="NCBIfam" id="NF003916">
    <property type="entry name" value="PRK05442.1"/>
    <property type="match status" value="1"/>
</dbReference>
<dbReference type="PANTHER" id="PTHR23382">
    <property type="entry name" value="MALATE DEHYDROGENASE"/>
    <property type="match status" value="1"/>
</dbReference>
<dbReference type="Pfam" id="PF02866">
    <property type="entry name" value="Ldh_1_C"/>
    <property type="match status" value="1"/>
</dbReference>
<dbReference type="Pfam" id="PF00056">
    <property type="entry name" value="Ldh_1_N"/>
    <property type="match status" value="1"/>
</dbReference>
<dbReference type="PIRSF" id="PIRSF000102">
    <property type="entry name" value="Lac_mal_DH"/>
    <property type="match status" value="1"/>
</dbReference>
<dbReference type="SUPFAM" id="SSF56327">
    <property type="entry name" value="LDH C-terminal domain-like"/>
    <property type="match status" value="1"/>
</dbReference>
<dbReference type="SUPFAM" id="SSF51735">
    <property type="entry name" value="NAD(P)-binding Rossmann-fold domains"/>
    <property type="match status" value="1"/>
</dbReference>
<dbReference type="PROSITE" id="PS00068">
    <property type="entry name" value="MDH"/>
    <property type="match status" value="1"/>
</dbReference>
<evidence type="ECO:0000250" key="1"/>
<evidence type="ECO:0000250" key="2">
    <source>
        <dbReference type="UniProtKB" id="P11708"/>
    </source>
</evidence>
<evidence type="ECO:0000250" key="3">
    <source>
        <dbReference type="UniProtKB" id="P93819"/>
    </source>
</evidence>
<evidence type="ECO:0000255" key="4">
    <source>
        <dbReference type="PROSITE-ProRule" id="PRU10004"/>
    </source>
</evidence>
<evidence type="ECO:0000305" key="5"/>